<gene>
    <name evidence="1" type="primary">nudI</name>
    <name type="ordered locus">SFV_2321</name>
</gene>
<organism>
    <name type="scientific">Shigella flexneri serotype 5b (strain 8401)</name>
    <dbReference type="NCBI Taxonomy" id="373384"/>
    <lineage>
        <taxon>Bacteria</taxon>
        <taxon>Pseudomonadati</taxon>
        <taxon>Pseudomonadota</taxon>
        <taxon>Gammaproteobacteria</taxon>
        <taxon>Enterobacterales</taxon>
        <taxon>Enterobacteriaceae</taxon>
        <taxon>Shigella</taxon>
    </lineage>
</organism>
<name>NUDI_SHIF8</name>
<proteinExistence type="inferred from homology"/>
<protein>
    <recommendedName>
        <fullName evidence="1">Nucleoside triphosphatase NudI</fullName>
        <ecNumber evidence="1">3.6.1.9</ecNumber>
    </recommendedName>
    <alternativeName>
        <fullName evidence="1">Nucleotide diphosphatase NudI</fullName>
    </alternativeName>
    <alternativeName>
        <fullName evidence="1">Pyrimidine deoxynucleoside triphosphate diphosphatase</fullName>
    </alternativeName>
    <alternativeName>
        <fullName evidence="1">dCTP diphosphatase</fullName>
        <ecNumber evidence="1">3.6.1.12</ecNumber>
    </alternativeName>
    <alternativeName>
        <fullName evidence="1">dTTP diphosphatase</fullName>
        <ecNumber evidence="1">3.6.1.-</ecNumber>
    </alternativeName>
    <alternativeName>
        <fullName evidence="1">dUTP diphosphatase</fullName>
        <ecNumber evidence="1">3.6.1.23</ecNumber>
    </alternativeName>
</protein>
<accession>Q0T2N2</accession>
<feature type="chain" id="PRO_0000342142" description="Nucleoside triphosphatase NudI">
    <location>
        <begin position="1"/>
        <end position="141"/>
    </location>
</feature>
<feature type="domain" description="Nudix hydrolase" evidence="1">
    <location>
        <begin position="1"/>
        <end position="141"/>
    </location>
</feature>
<feature type="short sequence motif" description="Nudix box">
    <location>
        <begin position="38"/>
        <end position="59"/>
    </location>
</feature>
<reference key="1">
    <citation type="journal article" date="2006" name="BMC Genomics">
        <title>Complete genome sequence of Shigella flexneri 5b and comparison with Shigella flexneri 2a.</title>
        <authorList>
            <person name="Nie H."/>
            <person name="Yang F."/>
            <person name="Zhang X."/>
            <person name="Yang J."/>
            <person name="Chen L."/>
            <person name="Wang J."/>
            <person name="Xiong Z."/>
            <person name="Peng J."/>
            <person name="Sun L."/>
            <person name="Dong J."/>
            <person name="Xue Y."/>
            <person name="Xu X."/>
            <person name="Chen S."/>
            <person name="Yao Z."/>
            <person name="Shen Y."/>
            <person name="Jin Q."/>
        </authorList>
    </citation>
    <scope>NUCLEOTIDE SEQUENCE [LARGE SCALE GENOMIC DNA]</scope>
    <source>
        <strain>8401</strain>
    </source>
</reference>
<keyword id="KW-0378">Hydrolase</keyword>
<keyword id="KW-0460">Magnesium</keyword>
<comment type="function">
    <text evidence="1">Catalyzes the hydrolysis of nucleoside triphosphates, with a preference for pyrimidine deoxynucleoside triphosphates (dUTP, dTTP and dCTP).</text>
</comment>
<comment type="catalytic activity">
    <reaction evidence="1">
        <text>a ribonucleoside 5'-triphosphate + H2O = a ribonucleoside 5'-phosphate + diphosphate + H(+)</text>
        <dbReference type="Rhea" id="RHEA:23996"/>
        <dbReference type="ChEBI" id="CHEBI:15377"/>
        <dbReference type="ChEBI" id="CHEBI:15378"/>
        <dbReference type="ChEBI" id="CHEBI:33019"/>
        <dbReference type="ChEBI" id="CHEBI:58043"/>
        <dbReference type="ChEBI" id="CHEBI:61557"/>
        <dbReference type="EC" id="3.6.1.9"/>
    </reaction>
</comment>
<comment type="catalytic activity">
    <reaction evidence="1">
        <text>a 2'-deoxyribonucleoside 5'-triphosphate + H2O = a 2'-deoxyribonucleoside 5'-phosphate + diphosphate + H(+)</text>
        <dbReference type="Rhea" id="RHEA:44644"/>
        <dbReference type="ChEBI" id="CHEBI:15377"/>
        <dbReference type="ChEBI" id="CHEBI:15378"/>
        <dbReference type="ChEBI" id="CHEBI:33019"/>
        <dbReference type="ChEBI" id="CHEBI:61560"/>
        <dbReference type="ChEBI" id="CHEBI:65317"/>
        <dbReference type="EC" id="3.6.1.9"/>
    </reaction>
</comment>
<comment type="catalytic activity">
    <reaction evidence="1">
        <text>dUTP + H2O = dUMP + diphosphate + H(+)</text>
        <dbReference type="Rhea" id="RHEA:10248"/>
        <dbReference type="ChEBI" id="CHEBI:15377"/>
        <dbReference type="ChEBI" id="CHEBI:15378"/>
        <dbReference type="ChEBI" id="CHEBI:33019"/>
        <dbReference type="ChEBI" id="CHEBI:61555"/>
        <dbReference type="ChEBI" id="CHEBI:246422"/>
        <dbReference type="EC" id="3.6.1.9"/>
    </reaction>
</comment>
<comment type="catalytic activity">
    <reaction evidence="1">
        <text>dUTP + H2O = dUMP + diphosphate + H(+)</text>
        <dbReference type="Rhea" id="RHEA:10248"/>
        <dbReference type="ChEBI" id="CHEBI:15377"/>
        <dbReference type="ChEBI" id="CHEBI:15378"/>
        <dbReference type="ChEBI" id="CHEBI:33019"/>
        <dbReference type="ChEBI" id="CHEBI:61555"/>
        <dbReference type="ChEBI" id="CHEBI:246422"/>
        <dbReference type="EC" id="3.6.1.23"/>
    </reaction>
</comment>
<comment type="catalytic activity">
    <reaction evidence="1">
        <text>dTTP + H2O = dTMP + diphosphate + H(+)</text>
        <dbReference type="Rhea" id="RHEA:28534"/>
        <dbReference type="ChEBI" id="CHEBI:15377"/>
        <dbReference type="ChEBI" id="CHEBI:15378"/>
        <dbReference type="ChEBI" id="CHEBI:33019"/>
        <dbReference type="ChEBI" id="CHEBI:37568"/>
        <dbReference type="ChEBI" id="CHEBI:63528"/>
        <dbReference type="EC" id="3.6.1.9"/>
    </reaction>
</comment>
<comment type="catalytic activity">
    <reaction evidence="1">
        <text>dCTP + H2O = dCMP + diphosphate + H(+)</text>
        <dbReference type="Rhea" id="RHEA:22636"/>
        <dbReference type="ChEBI" id="CHEBI:15377"/>
        <dbReference type="ChEBI" id="CHEBI:15378"/>
        <dbReference type="ChEBI" id="CHEBI:33019"/>
        <dbReference type="ChEBI" id="CHEBI:57566"/>
        <dbReference type="ChEBI" id="CHEBI:61481"/>
        <dbReference type="EC" id="3.6.1.9"/>
    </reaction>
</comment>
<comment type="catalytic activity">
    <reaction evidence="1">
        <text>dCTP + H2O = dCMP + diphosphate + H(+)</text>
        <dbReference type="Rhea" id="RHEA:22636"/>
        <dbReference type="ChEBI" id="CHEBI:15377"/>
        <dbReference type="ChEBI" id="CHEBI:15378"/>
        <dbReference type="ChEBI" id="CHEBI:33019"/>
        <dbReference type="ChEBI" id="CHEBI:57566"/>
        <dbReference type="ChEBI" id="CHEBI:61481"/>
        <dbReference type="EC" id="3.6.1.12"/>
    </reaction>
</comment>
<comment type="cofactor">
    <cofactor evidence="1">
        <name>Mg(2+)</name>
        <dbReference type="ChEBI" id="CHEBI:18420"/>
    </cofactor>
</comment>
<comment type="subunit">
    <text evidence="1">Monomer.</text>
</comment>
<comment type="similarity">
    <text evidence="1">Belongs to the Nudix hydrolase family. NudI subfamily.</text>
</comment>
<comment type="sequence caution" evidence="2">
    <conflict type="erroneous initiation">
        <sequence resource="EMBL-CDS" id="ABF04433"/>
    </conflict>
</comment>
<sequence length="141" mass="16361">MRQRTIVCPLIQNDGAYLLCKMADDRGVFPGQWALSGGGVESGERIEEALRREIREELGEQLLLTEITPWTFSDDIRTKTYADGRKEEIYMIYLIFDCVSANREVKINEEFQDYAWVKPEDLVHYDLNVATRKTLRLKGLL</sequence>
<dbReference type="EC" id="3.6.1.9" evidence="1"/>
<dbReference type="EC" id="3.6.1.12" evidence="1"/>
<dbReference type="EC" id="3.6.1.-" evidence="1"/>
<dbReference type="EC" id="3.6.1.23" evidence="1"/>
<dbReference type="EMBL" id="CP000266">
    <property type="protein sequence ID" value="ABF04433.1"/>
    <property type="status" value="ALT_INIT"/>
    <property type="molecule type" value="Genomic_DNA"/>
</dbReference>
<dbReference type="RefSeq" id="WP_001249889.1">
    <property type="nucleotide sequence ID" value="NC_008258.1"/>
</dbReference>
<dbReference type="SMR" id="Q0T2N2"/>
<dbReference type="GeneID" id="93774923"/>
<dbReference type="KEGG" id="sfv:SFV_2321"/>
<dbReference type="HOGENOM" id="CLU_037162_31_0_6"/>
<dbReference type="Proteomes" id="UP000000659">
    <property type="component" value="Chromosome"/>
</dbReference>
<dbReference type="GO" id="GO:0047840">
    <property type="term" value="F:dCTP diphosphatase activity"/>
    <property type="evidence" value="ECO:0007669"/>
    <property type="project" value="UniProtKB-EC"/>
</dbReference>
<dbReference type="GO" id="GO:0036218">
    <property type="term" value="F:dTTP diphosphatase activity"/>
    <property type="evidence" value="ECO:0007669"/>
    <property type="project" value="RHEA"/>
</dbReference>
<dbReference type="GO" id="GO:0004170">
    <property type="term" value="F:dUTP diphosphatase activity"/>
    <property type="evidence" value="ECO:0007669"/>
    <property type="project" value="UniProtKB-EC"/>
</dbReference>
<dbReference type="GO" id="GO:0000287">
    <property type="term" value="F:magnesium ion binding"/>
    <property type="evidence" value="ECO:0007669"/>
    <property type="project" value="UniProtKB-UniRule"/>
</dbReference>
<dbReference type="FunFam" id="3.90.79.10:FF:000039">
    <property type="entry name" value="Nucleoside triphosphatase NudI"/>
    <property type="match status" value="1"/>
</dbReference>
<dbReference type="Gene3D" id="3.90.79.10">
    <property type="entry name" value="Nucleoside Triphosphate Pyrophosphohydrolase"/>
    <property type="match status" value="1"/>
</dbReference>
<dbReference type="HAMAP" id="MF_01846">
    <property type="entry name" value="Nudix_NudI"/>
    <property type="match status" value="1"/>
</dbReference>
<dbReference type="InterPro" id="IPR023781">
    <property type="entry name" value="Nucleoside_triphosphatase_NudI"/>
</dbReference>
<dbReference type="InterPro" id="IPR020476">
    <property type="entry name" value="Nudix_hydrolase"/>
</dbReference>
<dbReference type="InterPro" id="IPR015797">
    <property type="entry name" value="NUDIX_hydrolase-like_dom_sf"/>
</dbReference>
<dbReference type="InterPro" id="IPR020084">
    <property type="entry name" value="NUDIX_hydrolase_CS"/>
</dbReference>
<dbReference type="InterPro" id="IPR000086">
    <property type="entry name" value="NUDIX_hydrolase_dom"/>
</dbReference>
<dbReference type="NCBIfam" id="NF012016">
    <property type="entry name" value="PRK15472.1"/>
    <property type="match status" value="1"/>
</dbReference>
<dbReference type="PANTHER" id="PTHR43046">
    <property type="entry name" value="GDP-MANNOSE MANNOSYL HYDROLASE"/>
    <property type="match status" value="1"/>
</dbReference>
<dbReference type="PANTHER" id="PTHR43046:SF14">
    <property type="entry name" value="MUTT_NUDIX FAMILY PROTEIN"/>
    <property type="match status" value="1"/>
</dbReference>
<dbReference type="Pfam" id="PF00293">
    <property type="entry name" value="NUDIX"/>
    <property type="match status" value="1"/>
</dbReference>
<dbReference type="PRINTS" id="PR00502">
    <property type="entry name" value="NUDIXFAMILY"/>
</dbReference>
<dbReference type="SUPFAM" id="SSF55811">
    <property type="entry name" value="Nudix"/>
    <property type="match status" value="1"/>
</dbReference>
<dbReference type="PROSITE" id="PS51462">
    <property type="entry name" value="NUDIX"/>
    <property type="match status" value="1"/>
</dbReference>
<dbReference type="PROSITE" id="PS00893">
    <property type="entry name" value="NUDIX_BOX"/>
    <property type="match status" value="1"/>
</dbReference>
<evidence type="ECO:0000255" key="1">
    <source>
        <dbReference type="HAMAP-Rule" id="MF_01846"/>
    </source>
</evidence>
<evidence type="ECO:0000305" key="2"/>